<gene>
    <name type="ordered locus">YPTS_0048</name>
</gene>
<comment type="similarity">
    <text evidence="1">Belongs to the UPF0758 family. YicR subfamily.</text>
</comment>
<feature type="chain" id="PRO_1000089873" description="UPF0758 protein YPTS_0048">
    <location>
        <begin position="1"/>
        <end position="222"/>
    </location>
</feature>
<feature type="domain" description="MPN" evidence="2">
    <location>
        <begin position="100"/>
        <end position="222"/>
    </location>
</feature>
<feature type="short sequence motif" description="JAMM motif" evidence="2">
    <location>
        <begin position="171"/>
        <end position="184"/>
    </location>
</feature>
<feature type="binding site" evidence="2">
    <location>
        <position position="171"/>
    </location>
    <ligand>
        <name>Zn(2+)</name>
        <dbReference type="ChEBI" id="CHEBI:29105"/>
        <note>catalytic</note>
    </ligand>
</feature>
<feature type="binding site" evidence="2">
    <location>
        <position position="173"/>
    </location>
    <ligand>
        <name>Zn(2+)</name>
        <dbReference type="ChEBI" id="CHEBI:29105"/>
        <note>catalytic</note>
    </ligand>
</feature>
<feature type="binding site" evidence="2">
    <location>
        <position position="184"/>
    </location>
    <ligand>
        <name>Zn(2+)</name>
        <dbReference type="ChEBI" id="CHEBI:29105"/>
        <note>catalytic</note>
    </ligand>
</feature>
<dbReference type="EMBL" id="CP001048">
    <property type="protein sequence ID" value="ACC87047.1"/>
    <property type="molecule type" value="Genomic_DNA"/>
</dbReference>
<dbReference type="SMR" id="B2JYN3"/>
<dbReference type="KEGG" id="ypb:YPTS_0048"/>
<dbReference type="PATRIC" id="fig|502801.10.peg.3724"/>
<dbReference type="GO" id="GO:0046872">
    <property type="term" value="F:metal ion binding"/>
    <property type="evidence" value="ECO:0007669"/>
    <property type="project" value="UniProtKB-KW"/>
</dbReference>
<dbReference type="GO" id="GO:0008237">
    <property type="term" value="F:metallopeptidase activity"/>
    <property type="evidence" value="ECO:0007669"/>
    <property type="project" value="UniProtKB-KW"/>
</dbReference>
<dbReference type="GO" id="GO:0006508">
    <property type="term" value="P:proteolysis"/>
    <property type="evidence" value="ECO:0007669"/>
    <property type="project" value="UniProtKB-KW"/>
</dbReference>
<dbReference type="CDD" id="cd08071">
    <property type="entry name" value="MPN_DUF2466"/>
    <property type="match status" value="1"/>
</dbReference>
<dbReference type="Gene3D" id="3.40.140.10">
    <property type="entry name" value="Cytidine Deaminase, domain 2"/>
    <property type="match status" value="1"/>
</dbReference>
<dbReference type="HAMAP" id="MF_00018">
    <property type="entry name" value="UPF0758_YicR"/>
    <property type="match status" value="1"/>
</dbReference>
<dbReference type="InterPro" id="IPR037518">
    <property type="entry name" value="MPN"/>
</dbReference>
<dbReference type="InterPro" id="IPR025657">
    <property type="entry name" value="RadC_JAB"/>
</dbReference>
<dbReference type="InterPro" id="IPR010994">
    <property type="entry name" value="RuvA_2-like"/>
</dbReference>
<dbReference type="InterPro" id="IPR001405">
    <property type="entry name" value="UPF0758"/>
</dbReference>
<dbReference type="InterPro" id="IPR020891">
    <property type="entry name" value="UPF0758_CS"/>
</dbReference>
<dbReference type="InterPro" id="IPR046778">
    <property type="entry name" value="UPF0758_N"/>
</dbReference>
<dbReference type="InterPro" id="IPR022820">
    <property type="entry name" value="UPF0758_YicR"/>
</dbReference>
<dbReference type="NCBIfam" id="NF000642">
    <property type="entry name" value="PRK00024.1"/>
    <property type="match status" value="1"/>
</dbReference>
<dbReference type="NCBIfam" id="TIGR00608">
    <property type="entry name" value="radc"/>
    <property type="match status" value="1"/>
</dbReference>
<dbReference type="PANTHER" id="PTHR30471">
    <property type="entry name" value="DNA REPAIR PROTEIN RADC"/>
    <property type="match status" value="1"/>
</dbReference>
<dbReference type="PANTHER" id="PTHR30471:SF3">
    <property type="entry name" value="UPF0758 PROTEIN YEES-RELATED"/>
    <property type="match status" value="1"/>
</dbReference>
<dbReference type="Pfam" id="PF04002">
    <property type="entry name" value="RadC"/>
    <property type="match status" value="1"/>
</dbReference>
<dbReference type="Pfam" id="PF20582">
    <property type="entry name" value="UPF0758_N"/>
    <property type="match status" value="1"/>
</dbReference>
<dbReference type="SUPFAM" id="SSF47781">
    <property type="entry name" value="RuvA domain 2-like"/>
    <property type="match status" value="1"/>
</dbReference>
<dbReference type="PROSITE" id="PS50249">
    <property type="entry name" value="MPN"/>
    <property type="match status" value="1"/>
</dbReference>
<dbReference type="PROSITE" id="PS01302">
    <property type="entry name" value="UPF0758"/>
    <property type="match status" value="1"/>
</dbReference>
<keyword id="KW-0378">Hydrolase</keyword>
<keyword id="KW-0479">Metal-binding</keyword>
<keyword id="KW-0482">Metalloprotease</keyword>
<keyword id="KW-0645">Protease</keyword>
<keyword id="KW-0862">Zinc</keyword>
<name>Y048_YERPB</name>
<protein>
    <recommendedName>
        <fullName evidence="1">UPF0758 protein YPTS_0048</fullName>
    </recommendedName>
</protein>
<reference key="1">
    <citation type="submission" date="2008-04" db="EMBL/GenBank/DDBJ databases">
        <title>Complete sequence of Yersinia pseudotuberculosis PB1/+.</title>
        <authorList>
            <person name="Copeland A."/>
            <person name="Lucas S."/>
            <person name="Lapidus A."/>
            <person name="Glavina del Rio T."/>
            <person name="Dalin E."/>
            <person name="Tice H."/>
            <person name="Bruce D."/>
            <person name="Goodwin L."/>
            <person name="Pitluck S."/>
            <person name="Munk A.C."/>
            <person name="Brettin T."/>
            <person name="Detter J.C."/>
            <person name="Han C."/>
            <person name="Tapia R."/>
            <person name="Schmutz J."/>
            <person name="Larimer F."/>
            <person name="Land M."/>
            <person name="Hauser L."/>
            <person name="Challacombe J.F."/>
            <person name="Green L."/>
            <person name="Lindler L.E."/>
            <person name="Nikolich M.P."/>
            <person name="Richardson P."/>
        </authorList>
    </citation>
    <scope>NUCLEOTIDE SEQUENCE [LARGE SCALE GENOMIC DNA]</scope>
    <source>
        <strain>PB1/+</strain>
    </source>
</reference>
<accession>B2JYN3</accession>
<organism>
    <name type="scientific">Yersinia pseudotuberculosis serotype IB (strain PB1/+)</name>
    <dbReference type="NCBI Taxonomy" id="502801"/>
    <lineage>
        <taxon>Bacteria</taxon>
        <taxon>Pseudomonadati</taxon>
        <taxon>Pseudomonadota</taxon>
        <taxon>Gammaproteobacteria</taxon>
        <taxon>Enterobacterales</taxon>
        <taxon>Yersiniaceae</taxon>
        <taxon>Yersinia</taxon>
    </lineage>
</organism>
<proteinExistence type="inferred from homology"/>
<sequence length="222" mass="24814">MDEWYGQVAPREKLLKYGAAVLTDAELLAIFLRTGIPGMHVMKMAEYLIETFGSLHGLISADYQTLCAHKGIGASKYSQIQAIGELACRCFSSHLMRESVLLNPGITQKFLQNILSHREREIFLVVFLDNQHRVIRHEEMFTGTISSVEVHPREIVREALKVNAAALILAHNHPSGKAEPSQADRLITTQVIKACSLLDIRVLDHLVVGRGECVSFAERGWL</sequence>
<evidence type="ECO:0000255" key="1">
    <source>
        <dbReference type="HAMAP-Rule" id="MF_00018"/>
    </source>
</evidence>
<evidence type="ECO:0000255" key="2">
    <source>
        <dbReference type="PROSITE-ProRule" id="PRU01182"/>
    </source>
</evidence>